<reference key="1">
    <citation type="journal article" date="2000" name="Biochim. Biophys. Acta">
        <title>Genetic analysis of the gene cluster for the synthesis of serotype a-specific polysaccharide antigen in Aactinobacillus actinomycetemcomitans.</title>
        <authorList>
            <person name="Suzuki N."/>
            <person name="Nakano Y."/>
            <person name="Yoshida Y."/>
            <person name="Nakao H."/>
            <person name="Yamashita Y."/>
            <person name="Koga T."/>
        </authorList>
    </citation>
    <scope>NUCLEOTIDE SEQUENCE [GENOMIC DNA]</scope>
    <source>
        <strain>SUNYaB 75 / Serotype a</strain>
    </source>
</reference>
<reference key="2">
    <citation type="journal article" date="2002" name="Eur. J. Biochem.">
        <title>Guanosine diphosphate-4-keto-6-deoxy-d-mannose reductase in the pathway for the synthesis of GDP-6-deoxy-d-talose in Actinobacillus actinomycetemcomitans.</title>
        <authorList>
            <person name="Suzuki N."/>
            <person name="Nakano Y."/>
            <person name="Yoshida Y."/>
            <person name="Nezu T."/>
            <person name="Terada Y."/>
            <person name="Yamashita Y."/>
            <person name="Koga T."/>
        </authorList>
    </citation>
    <scope>FUNCTION</scope>
    <scope>CATALYTIC ACTIVITY</scope>
    <scope>PATHWAY</scope>
    <source>
        <strain>SUNYaB 75 / Serotype a</strain>
    </source>
</reference>
<proteinExistence type="evidence at protein level"/>
<dbReference type="EC" id="1.1.1.135"/>
<dbReference type="EMBL" id="AB046360">
    <property type="protein sequence ID" value="BAB03206.1"/>
    <property type="molecule type" value="Genomic_DNA"/>
</dbReference>
<dbReference type="SMR" id="Q9JRN7"/>
<dbReference type="STRING" id="714.ACT75_06325"/>
<dbReference type="eggNOG" id="COG0451">
    <property type="taxonomic scope" value="Bacteria"/>
</dbReference>
<dbReference type="BioCyc" id="MetaCyc:MONOMER-13570"/>
<dbReference type="UniPathway" id="UPA00281"/>
<dbReference type="GO" id="GO:0047916">
    <property type="term" value="F:GDP-6-deoxy-D-talose 4-dehydrogenase activity"/>
    <property type="evidence" value="ECO:0007669"/>
    <property type="project" value="UniProtKB-EC"/>
</dbReference>
<dbReference type="GO" id="GO:0009243">
    <property type="term" value="P:O antigen biosynthetic process"/>
    <property type="evidence" value="ECO:0007669"/>
    <property type="project" value="UniProtKB-UniPathway"/>
</dbReference>
<dbReference type="Gene3D" id="3.40.50.720">
    <property type="entry name" value="NAD(P)-binding Rossmann-like Domain"/>
    <property type="match status" value="1"/>
</dbReference>
<dbReference type="Gene3D" id="3.90.25.10">
    <property type="entry name" value="UDP-galactose 4-epimerase, domain 1"/>
    <property type="match status" value="1"/>
</dbReference>
<dbReference type="InterPro" id="IPR001509">
    <property type="entry name" value="Epimerase_deHydtase"/>
</dbReference>
<dbReference type="InterPro" id="IPR036291">
    <property type="entry name" value="NAD(P)-bd_dom_sf"/>
</dbReference>
<dbReference type="PANTHER" id="PTHR43000">
    <property type="entry name" value="DTDP-D-GLUCOSE 4,6-DEHYDRATASE-RELATED"/>
    <property type="match status" value="1"/>
</dbReference>
<dbReference type="Pfam" id="PF01370">
    <property type="entry name" value="Epimerase"/>
    <property type="match status" value="1"/>
</dbReference>
<dbReference type="SUPFAM" id="SSF51735">
    <property type="entry name" value="NAD(P)-binding Rossmann-fold domains"/>
    <property type="match status" value="1"/>
</dbReference>
<accession>Q9JRN7</accession>
<accession>D4EEL4</accession>
<evidence type="ECO:0000250" key="1"/>
<evidence type="ECO:0000269" key="2">
    <source>
    </source>
</evidence>
<evidence type="ECO:0000305" key="3"/>
<feature type="chain" id="PRO_0000424094" description="GDP-6-deoxy-D-talose 4-dehydrogenase">
    <location>
        <begin position="1"/>
        <end position="294"/>
    </location>
</feature>
<feature type="active site" description="Proton acceptor" evidence="1">
    <location>
        <position position="128"/>
    </location>
</feature>
<feature type="binding site" evidence="1">
    <location>
        <begin position="11"/>
        <end position="12"/>
    </location>
    <ligand>
        <name>NAD(+)</name>
        <dbReference type="ChEBI" id="CHEBI:57540"/>
    </ligand>
</feature>
<feature type="binding site" evidence="1">
    <location>
        <begin position="38"/>
        <end position="39"/>
    </location>
    <ligand>
        <name>NAD(+)</name>
        <dbReference type="ChEBI" id="CHEBI:57540"/>
    </ligand>
</feature>
<feature type="binding site" evidence="1">
    <location>
        <begin position="60"/>
        <end position="64"/>
    </location>
    <ligand>
        <name>NAD(+)</name>
        <dbReference type="ChEBI" id="CHEBI:57540"/>
    </ligand>
</feature>
<feature type="binding site" evidence="1">
    <location>
        <position position="104"/>
    </location>
    <ligand>
        <name>NAD(+)</name>
        <dbReference type="ChEBI" id="CHEBI:57540"/>
    </ligand>
</feature>
<feature type="binding site" evidence="1">
    <location>
        <position position="104"/>
    </location>
    <ligand>
        <name>substrate</name>
    </ligand>
</feature>
<feature type="binding site" evidence="1">
    <location>
        <position position="128"/>
    </location>
    <ligand>
        <name>NAD(+)</name>
        <dbReference type="ChEBI" id="CHEBI:57540"/>
    </ligand>
</feature>
<feature type="binding site" evidence="1">
    <location>
        <position position="128"/>
    </location>
    <ligand>
        <name>substrate</name>
    </ligand>
</feature>
<feature type="binding site" evidence="1">
    <location>
        <position position="132"/>
    </location>
    <ligand>
        <name>NAD(+)</name>
        <dbReference type="ChEBI" id="CHEBI:57540"/>
    </ligand>
</feature>
<feature type="binding site" evidence="1">
    <location>
        <position position="154"/>
    </location>
    <ligand>
        <name>NAD(+)</name>
        <dbReference type="ChEBI" id="CHEBI:57540"/>
    </ligand>
</feature>
<feature type="binding site" evidence="1">
    <location>
        <position position="155"/>
    </location>
    <ligand>
        <name>substrate</name>
    </ligand>
</feature>
<feature type="binding site" evidence="1">
    <location>
        <position position="190"/>
    </location>
    <ligand>
        <name>substrate</name>
    </ligand>
</feature>
<comment type="function">
    <text evidence="2">Catalyzes the conversion of GDP-4-dehydro-6-deoxy-D-mannose to GDP-6-deoxy-D-talose.</text>
</comment>
<comment type="catalytic activity">
    <reaction evidence="2">
        <text>GDP-6-deoxy-alpha-D-talose + NAD(+) = GDP-4-dehydro-alpha-D-rhamnose + NADH + H(+)</text>
        <dbReference type="Rhea" id="RHEA:10728"/>
        <dbReference type="ChEBI" id="CHEBI:15378"/>
        <dbReference type="ChEBI" id="CHEBI:57540"/>
        <dbReference type="ChEBI" id="CHEBI:57638"/>
        <dbReference type="ChEBI" id="CHEBI:57945"/>
        <dbReference type="ChEBI" id="CHEBI:57964"/>
        <dbReference type="EC" id="1.1.1.135"/>
    </reaction>
</comment>
<comment type="catalytic activity">
    <reaction evidence="2">
        <text>GDP-6-deoxy-alpha-D-talose + NADP(+) = GDP-4-dehydro-alpha-D-rhamnose + NADPH + H(+)</text>
        <dbReference type="Rhea" id="RHEA:10724"/>
        <dbReference type="ChEBI" id="CHEBI:15378"/>
        <dbReference type="ChEBI" id="CHEBI:57638"/>
        <dbReference type="ChEBI" id="CHEBI:57783"/>
        <dbReference type="ChEBI" id="CHEBI:57964"/>
        <dbReference type="ChEBI" id="CHEBI:58349"/>
        <dbReference type="EC" id="1.1.1.135"/>
    </reaction>
</comment>
<comment type="pathway">
    <text evidence="2">Bacterial outer membrane biogenesis; LPS O-antigen biosynthesis.</text>
</comment>
<comment type="similarity">
    <text evidence="3">Belongs to the NAD(P)-dependent epimerase/dehydratase family.</text>
</comment>
<protein>
    <recommendedName>
        <fullName>GDP-6-deoxy-D-talose 4-dehydrogenase</fullName>
        <ecNumber>1.1.1.135</ecNumber>
    </recommendedName>
    <alternativeName>
        <fullName>GDP-4-keto-6-deoxy-D-mannose reductase</fullName>
    </alternativeName>
</protein>
<organism>
    <name type="scientific">Aggregatibacter actinomycetemcomitans</name>
    <name type="common">Actinobacillus actinomycetemcomitans</name>
    <name type="synonym">Haemophilus actinomycetemcomitans</name>
    <dbReference type="NCBI Taxonomy" id="714"/>
    <lineage>
        <taxon>Bacteria</taxon>
        <taxon>Pseudomonadati</taxon>
        <taxon>Pseudomonadota</taxon>
        <taxon>Gammaproteobacteria</taxon>
        <taxon>Pasteurellales</taxon>
        <taxon>Pasteurellaceae</taxon>
        <taxon>Aggregatibacter</taxon>
    </lineage>
</organism>
<sequence length="294" mass="33342">MKILVTGGSGFIGKNLIYLLREKREFEVFGATVEETMDLTNPCSVQSVLEKTKPDFIVHLAALTFVPNNNPITFYLVNTIGTENLLRSIVDLNVAKLGVLCFSTAGIYGIQETKLLSESLTPKPVNHYSMSKHCMEHIVNKYRCFRGITVVRPFNVLGLGQNINFLVPKMVSAFVKKDKTIELGNLDSVRDFISVNDCCDIIYRLISKLIENETINICTGIGYSVYQIFQLLCEISMHQMEIKQNELFVRHDDIPQMIGDPSKLLNVLGNDYRFTSVRAILEEMYKNRLLELSI</sequence>
<name>TLD_AGGAC</name>
<keyword id="KW-0448">Lipopolysaccharide biosynthesis</keyword>
<keyword id="KW-0520">NAD</keyword>
<keyword id="KW-0560">Oxidoreductase</keyword>
<gene>
    <name type="primary">tld</name>
</gene>